<proteinExistence type="evidence at protein level"/>
<reference key="1">
    <citation type="journal article" date="1994" name="J. Comp. Neurol.">
        <title>Restricted expression of a new paired-class homeobox gene in normal and regenerating adult goldfish retina.</title>
        <authorList>
            <person name="Levine E.M."/>
            <person name="Hitchcock P.F."/>
            <person name="Glasgow E."/>
            <person name="Schechter N."/>
        </authorList>
    </citation>
    <scope>NUCLEOTIDE SEQUENCE [MRNA]</scope>
    <source>
        <tissue>Retina</tissue>
    </source>
</reference>
<reference key="2">
    <citation type="journal article" date="2001" name="Proc. Natl. Acad. Sci. U.S.A.">
        <title>Ubc9 interacts with a nuclear localization signal and mediates nuclear localization of the paired-like homeobox protein Vsx-1 independent of SUMO-1 modification.</title>
        <authorList>
            <person name="Kurtzman A.L."/>
            <person name="Schechter N."/>
        </authorList>
    </citation>
    <scope>INTERACTION WITH UBE2I</scope>
    <scope>NUCLEAR LOCALIZATION SIGNAL</scope>
</reference>
<accession>Q90277</accession>
<evidence type="ECO:0000250" key="1">
    <source>
        <dbReference type="UniProtKB" id="O42250"/>
    </source>
</evidence>
<evidence type="ECO:0000255" key="2">
    <source>
        <dbReference type="PROSITE-ProRule" id="PRU00108"/>
    </source>
</evidence>
<evidence type="ECO:0000255" key="3">
    <source>
        <dbReference type="PROSITE-ProRule" id="PRU00829"/>
    </source>
</evidence>
<evidence type="ECO:0000256" key="4">
    <source>
        <dbReference type="SAM" id="MobiDB-lite"/>
    </source>
</evidence>
<evidence type="ECO:0000269" key="5">
    <source>
    </source>
</evidence>
<evidence type="ECO:0000305" key="6"/>
<keyword id="KW-0217">Developmental protein</keyword>
<keyword id="KW-0238">DNA-binding</keyword>
<keyword id="KW-0371">Homeobox</keyword>
<keyword id="KW-0539">Nucleus</keyword>
<keyword id="KW-1185">Reference proteome</keyword>
<keyword id="KW-0716">Sensory transduction</keyword>
<keyword id="KW-0804">Transcription</keyword>
<keyword id="KW-0805">Transcription regulation</keyword>
<keyword id="KW-0844">Vision</keyword>
<comment type="function">
    <text>May stabilize the differentiated state of a subset of cells in the inner nuclear layer and may be involved in cellular differentiation during retinal development and regeneration.</text>
</comment>
<comment type="subunit">
    <text evidence="5">Interacts with UBE2I.</text>
</comment>
<comment type="subcellular location">
    <subcellularLocation>
        <location evidence="1">Nucleus</location>
    </subcellularLocation>
</comment>
<comment type="tissue specificity">
    <text>Restricted to the neural retina.</text>
</comment>
<comment type="domain">
    <text>The NLS interacts with UBE2I.</text>
</comment>
<comment type="similarity">
    <text evidence="6">Belongs to the paired homeobox family.</text>
</comment>
<name>VSX1_CARAU</name>
<sequence>MTGREEAIDEKPKVKLYPSFGIDKARLNGSGFRSKGFAITDLLGLESDLQPHQSGSGAGANGEGQSAALGGFAFPGGSLPIGLGFLCSLAAQQPPGAPCFLPSHIPLLQPRTESHFMQNLEQQRDAYSDDDCLSGDRNDGKNSQKRKKRRHRTVFTSHQLEELEKAFHEAHYPDVYAREMLAMKTELPEDRIQVWFQNRRAKWRKREKCWGRSSVMAEYGLYGAMVRHSIPLPESIINSAKNGMMGSCAPWLLGEPAGMHKKSLEIGKNPPGTPESTHSDSYSEEHKVKDSDTTWSSGANGADDSEDMAIDLSSTSKQESKSTLKRSPPHTEDSSDSETES</sequence>
<organism>
    <name type="scientific">Carassius auratus</name>
    <name type="common">Goldfish</name>
    <dbReference type="NCBI Taxonomy" id="7957"/>
    <lineage>
        <taxon>Eukaryota</taxon>
        <taxon>Metazoa</taxon>
        <taxon>Chordata</taxon>
        <taxon>Craniata</taxon>
        <taxon>Vertebrata</taxon>
        <taxon>Euteleostomi</taxon>
        <taxon>Actinopterygii</taxon>
        <taxon>Neopterygii</taxon>
        <taxon>Teleostei</taxon>
        <taxon>Ostariophysi</taxon>
        <taxon>Cypriniformes</taxon>
        <taxon>Cyprinidae</taxon>
        <taxon>Cyprininae</taxon>
        <taxon>Carassius</taxon>
    </lineage>
</organism>
<protein>
    <recommendedName>
        <fullName>Visual system homeobox 1</fullName>
    </recommendedName>
    <alternativeName>
        <fullName>Homeobox protein VSX-1</fullName>
    </alternativeName>
    <alternativeName>
        <fullName>Transcription factor VSX1</fullName>
    </alternativeName>
</protein>
<gene>
    <name type="primary">vsx1</name>
</gene>
<feature type="chain" id="PRO_0000049359" description="Visual system homeobox 1">
    <location>
        <begin position="1"/>
        <end position="341"/>
    </location>
</feature>
<feature type="domain" description="CVC" evidence="3">
    <location>
        <begin position="208"/>
        <end position="265"/>
    </location>
</feature>
<feature type="DNA-binding region" description="Homeobox" evidence="2">
    <location>
        <begin position="148"/>
        <end position="207"/>
    </location>
</feature>
<feature type="region of interest" description="Disordered" evidence="4">
    <location>
        <begin position="127"/>
        <end position="151"/>
    </location>
</feature>
<feature type="region of interest" description="Disordered" evidence="4">
    <location>
        <begin position="262"/>
        <end position="341"/>
    </location>
</feature>
<feature type="short sequence motif" description="Octapeptide motif">
    <location>
        <begin position="37"/>
        <end position="44"/>
    </location>
</feature>
<feature type="short sequence motif" description="Nuclear localization signal" evidence="5">
    <location>
        <begin position="147"/>
        <end position="151"/>
    </location>
</feature>
<feature type="compositionally biased region" description="Basic and acidic residues" evidence="4">
    <location>
        <begin position="277"/>
        <end position="292"/>
    </location>
</feature>
<dbReference type="EMBL" id="U07056">
    <property type="protein sequence ID" value="AAC24600.1"/>
    <property type="molecule type" value="mRNA"/>
</dbReference>
<dbReference type="SMR" id="Q90277"/>
<dbReference type="Proteomes" id="UP000515129">
    <property type="component" value="Unplaced"/>
</dbReference>
<dbReference type="GO" id="GO:0005634">
    <property type="term" value="C:nucleus"/>
    <property type="evidence" value="ECO:0007669"/>
    <property type="project" value="UniProtKB-SubCell"/>
</dbReference>
<dbReference type="GO" id="GO:0000981">
    <property type="term" value="F:DNA-binding transcription factor activity, RNA polymerase II-specific"/>
    <property type="evidence" value="ECO:0007669"/>
    <property type="project" value="InterPro"/>
</dbReference>
<dbReference type="GO" id="GO:0000976">
    <property type="term" value="F:transcription cis-regulatory region binding"/>
    <property type="evidence" value="ECO:0007669"/>
    <property type="project" value="TreeGrafter"/>
</dbReference>
<dbReference type="GO" id="GO:0007601">
    <property type="term" value="P:visual perception"/>
    <property type="evidence" value="ECO:0007669"/>
    <property type="project" value="UniProtKB-KW"/>
</dbReference>
<dbReference type="CDD" id="cd00086">
    <property type="entry name" value="homeodomain"/>
    <property type="match status" value="1"/>
</dbReference>
<dbReference type="FunFam" id="1.10.10.60:FF:000065">
    <property type="entry name" value="Visual system homeobox 1"/>
    <property type="match status" value="1"/>
</dbReference>
<dbReference type="Gene3D" id="1.10.10.60">
    <property type="entry name" value="Homeodomain-like"/>
    <property type="match status" value="1"/>
</dbReference>
<dbReference type="InterPro" id="IPR023339">
    <property type="entry name" value="CVC"/>
</dbReference>
<dbReference type="InterPro" id="IPR001356">
    <property type="entry name" value="HD"/>
</dbReference>
<dbReference type="InterPro" id="IPR017970">
    <property type="entry name" value="Homeobox_CS"/>
</dbReference>
<dbReference type="InterPro" id="IPR051775">
    <property type="entry name" value="Homeobox_domain"/>
</dbReference>
<dbReference type="InterPro" id="IPR009057">
    <property type="entry name" value="Homeodomain-like_sf"/>
</dbReference>
<dbReference type="PANTHER" id="PTHR24323">
    <property type="entry name" value="CEH-10 HOMEODOMAIN-CONTAINING HOMOLOG"/>
    <property type="match status" value="1"/>
</dbReference>
<dbReference type="PANTHER" id="PTHR24323:SF3">
    <property type="entry name" value="VISUAL SYSTEM HOMEOBOX 1"/>
    <property type="match status" value="1"/>
</dbReference>
<dbReference type="Pfam" id="PF00046">
    <property type="entry name" value="Homeodomain"/>
    <property type="match status" value="1"/>
</dbReference>
<dbReference type="SMART" id="SM00389">
    <property type="entry name" value="HOX"/>
    <property type="match status" value="1"/>
</dbReference>
<dbReference type="SUPFAM" id="SSF46689">
    <property type="entry name" value="Homeodomain-like"/>
    <property type="match status" value="1"/>
</dbReference>
<dbReference type="PROSITE" id="PS51496">
    <property type="entry name" value="CVC"/>
    <property type="match status" value="1"/>
</dbReference>
<dbReference type="PROSITE" id="PS00027">
    <property type="entry name" value="HOMEOBOX_1"/>
    <property type="match status" value="1"/>
</dbReference>
<dbReference type="PROSITE" id="PS50071">
    <property type="entry name" value="HOMEOBOX_2"/>
    <property type="match status" value="1"/>
</dbReference>